<comment type="similarity">
    <text evidence="1">Belongs to the UPF0301 (AlgH) family.</text>
</comment>
<name>Y636_LEGPA</name>
<gene>
    <name type="ordered locus">lpp0636</name>
</gene>
<protein>
    <recommendedName>
        <fullName evidence="1">UPF0301 protein lpp0636</fullName>
    </recommendedName>
</protein>
<organism>
    <name type="scientific">Legionella pneumophila (strain Paris)</name>
    <dbReference type="NCBI Taxonomy" id="297246"/>
    <lineage>
        <taxon>Bacteria</taxon>
        <taxon>Pseudomonadati</taxon>
        <taxon>Pseudomonadota</taxon>
        <taxon>Gammaproteobacteria</taxon>
        <taxon>Legionellales</taxon>
        <taxon>Legionellaceae</taxon>
        <taxon>Legionella</taxon>
    </lineage>
</organism>
<accession>Q5X7G9</accession>
<proteinExistence type="inferred from homology"/>
<evidence type="ECO:0000255" key="1">
    <source>
        <dbReference type="HAMAP-Rule" id="MF_00758"/>
    </source>
</evidence>
<sequence>MAIISSLANHLLIAMPSLKDPNFERSVVYLCEHNEQGSVGLIINRPLQFPLSIVFEQLQIEPIRVEKNGLPLLFGGPVQPERGFVIHKQMGGWRSSLFLQDEVTVTTSNDIIRAIAYDEGPKDVLITLGYAAWTEQQLEREIMSNTWLVCPYKSEILYEVPFEERWEYAGLTLGIKMNQLSSDAGHA</sequence>
<reference key="1">
    <citation type="journal article" date="2004" name="Nat. Genet.">
        <title>Evidence in the Legionella pneumophila genome for exploitation of host cell functions and high genome plasticity.</title>
        <authorList>
            <person name="Cazalet C."/>
            <person name="Rusniok C."/>
            <person name="Brueggemann H."/>
            <person name="Zidane N."/>
            <person name="Magnier A."/>
            <person name="Ma L."/>
            <person name="Tichit M."/>
            <person name="Jarraud S."/>
            <person name="Bouchier C."/>
            <person name="Vandenesch F."/>
            <person name="Kunst F."/>
            <person name="Etienne J."/>
            <person name="Glaser P."/>
            <person name="Buchrieser C."/>
        </authorList>
    </citation>
    <scope>NUCLEOTIDE SEQUENCE [LARGE SCALE GENOMIC DNA]</scope>
    <source>
        <strain>Paris</strain>
    </source>
</reference>
<feature type="chain" id="PRO_0000258835" description="UPF0301 protein lpp0636">
    <location>
        <begin position="1"/>
        <end position="187"/>
    </location>
</feature>
<dbReference type="EMBL" id="CR628336">
    <property type="protein sequence ID" value="CAH11784.1"/>
    <property type="molecule type" value="Genomic_DNA"/>
</dbReference>
<dbReference type="RefSeq" id="WP_010946323.1">
    <property type="nucleotide sequence ID" value="NC_006368.1"/>
</dbReference>
<dbReference type="SMR" id="Q5X7G9"/>
<dbReference type="KEGG" id="lpp:lpp0636"/>
<dbReference type="LegioList" id="lpp0636"/>
<dbReference type="HOGENOM" id="CLU_057596_1_0_6"/>
<dbReference type="GO" id="GO:0005829">
    <property type="term" value="C:cytosol"/>
    <property type="evidence" value="ECO:0007669"/>
    <property type="project" value="TreeGrafter"/>
</dbReference>
<dbReference type="Gene3D" id="3.40.1740.10">
    <property type="entry name" value="VC0467-like"/>
    <property type="match status" value="1"/>
</dbReference>
<dbReference type="HAMAP" id="MF_00758">
    <property type="entry name" value="UPF0301"/>
    <property type="match status" value="1"/>
</dbReference>
<dbReference type="InterPro" id="IPR003774">
    <property type="entry name" value="AlgH-like"/>
</dbReference>
<dbReference type="NCBIfam" id="NF001266">
    <property type="entry name" value="PRK00228.1-1"/>
    <property type="match status" value="1"/>
</dbReference>
<dbReference type="PANTHER" id="PTHR30327">
    <property type="entry name" value="UNCHARACTERIZED PROTEIN YQGE"/>
    <property type="match status" value="1"/>
</dbReference>
<dbReference type="PANTHER" id="PTHR30327:SF1">
    <property type="entry name" value="UPF0301 PROTEIN YQGE"/>
    <property type="match status" value="1"/>
</dbReference>
<dbReference type="Pfam" id="PF02622">
    <property type="entry name" value="DUF179"/>
    <property type="match status" value="1"/>
</dbReference>
<dbReference type="SUPFAM" id="SSF143456">
    <property type="entry name" value="VC0467-like"/>
    <property type="match status" value="1"/>
</dbReference>